<sequence length="283" mass="30300">MAEITASLVKELRERTGAGMMECKKALVEANGDIELAIDNMRKSGQAKAAKKAGRVAAEGVILARIGAGFGVLVEMNCETDFVAKDAGFLGLANEVADFALANKGTTIETLAAQFEEKRAALVAKIGENMNIRRVQYLDGQVIAQYLHGAKIGVLVAGEGSDEELKKVAMHVAASRPEFVNPEDVSAEVVEHERQIQIDIAINSGKPKEIAEKMVEGRMKKFTGEVSLTGQAFVMDPSQSVGDYLKSVNTKVTNFIRLEVGEGIEKVEEDFAAEVAKITGGNA</sequence>
<organism>
    <name type="scientific">Actinobacillus pleuropneumoniae serotype 3 (strain JL03)</name>
    <dbReference type="NCBI Taxonomy" id="434271"/>
    <lineage>
        <taxon>Bacteria</taxon>
        <taxon>Pseudomonadati</taxon>
        <taxon>Pseudomonadota</taxon>
        <taxon>Gammaproteobacteria</taxon>
        <taxon>Pasteurellales</taxon>
        <taxon>Pasteurellaceae</taxon>
        <taxon>Actinobacillus</taxon>
    </lineage>
</organism>
<evidence type="ECO:0000255" key="1">
    <source>
        <dbReference type="HAMAP-Rule" id="MF_00050"/>
    </source>
</evidence>
<proteinExistence type="inferred from homology"/>
<gene>
    <name evidence="1" type="primary">tsf</name>
    <name type="ordered locus">APJL_0560</name>
</gene>
<feature type="chain" id="PRO_1000116683" description="Elongation factor Ts">
    <location>
        <begin position="1"/>
        <end position="283"/>
    </location>
</feature>
<feature type="region of interest" description="Involved in Mg(2+) ion dislocation from EF-Tu" evidence="1">
    <location>
        <begin position="80"/>
        <end position="83"/>
    </location>
</feature>
<comment type="function">
    <text evidence="1">Associates with the EF-Tu.GDP complex and induces the exchange of GDP to GTP. It remains bound to the aminoacyl-tRNA.EF-Tu.GTP complex up to the GTP hydrolysis stage on the ribosome.</text>
</comment>
<comment type="subcellular location">
    <subcellularLocation>
        <location evidence="1">Cytoplasm</location>
    </subcellularLocation>
</comment>
<comment type="similarity">
    <text evidence="1">Belongs to the EF-Ts family.</text>
</comment>
<name>EFTS_ACTPJ</name>
<protein>
    <recommendedName>
        <fullName evidence="1">Elongation factor Ts</fullName>
        <shortName evidence="1">EF-Ts</shortName>
    </recommendedName>
</protein>
<keyword id="KW-0963">Cytoplasm</keyword>
<keyword id="KW-0251">Elongation factor</keyword>
<keyword id="KW-0648">Protein biosynthesis</keyword>
<accession>B0BUC5</accession>
<dbReference type="EMBL" id="CP000687">
    <property type="protein sequence ID" value="ABY69130.1"/>
    <property type="molecule type" value="Genomic_DNA"/>
</dbReference>
<dbReference type="RefSeq" id="WP_005596783.1">
    <property type="nucleotide sequence ID" value="NC_010278.1"/>
</dbReference>
<dbReference type="SMR" id="B0BUC5"/>
<dbReference type="GeneID" id="48598755"/>
<dbReference type="KEGG" id="apj:APJL_0560"/>
<dbReference type="HOGENOM" id="CLU_047155_0_2_6"/>
<dbReference type="Proteomes" id="UP000008547">
    <property type="component" value="Chromosome"/>
</dbReference>
<dbReference type="GO" id="GO:0005737">
    <property type="term" value="C:cytoplasm"/>
    <property type="evidence" value="ECO:0007669"/>
    <property type="project" value="UniProtKB-SubCell"/>
</dbReference>
<dbReference type="GO" id="GO:0003746">
    <property type="term" value="F:translation elongation factor activity"/>
    <property type="evidence" value="ECO:0007669"/>
    <property type="project" value="UniProtKB-UniRule"/>
</dbReference>
<dbReference type="CDD" id="cd14275">
    <property type="entry name" value="UBA_EF-Ts"/>
    <property type="match status" value="1"/>
</dbReference>
<dbReference type="FunFam" id="1.10.286.20:FF:000001">
    <property type="entry name" value="Elongation factor Ts"/>
    <property type="match status" value="1"/>
</dbReference>
<dbReference type="FunFam" id="1.10.8.10:FF:000001">
    <property type="entry name" value="Elongation factor Ts"/>
    <property type="match status" value="1"/>
</dbReference>
<dbReference type="FunFam" id="3.30.479.20:FF:000001">
    <property type="entry name" value="Elongation factor Ts"/>
    <property type="match status" value="1"/>
</dbReference>
<dbReference type="Gene3D" id="1.10.286.20">
    <property type="match status" value="1"/>
</dbReference>
<dbReference type="Gene3D" id="1.10.8.10">
    <property type="entry name" value="DNA helicase RuvA subunit, C-terminal domain"/>
    <property type="match status" value="1"/>
</dbReference>
<dbReference type="Gene3D" id="3.30.479.20">
    <property type="entry name" value="Elongation factor Ts, dimerisation domain"/>
    <property type="match status" value="2"/>
</dbReference>
<dbReference type="HAMAP" id="MF_00050">
    <property type="entry name" value="EF_Ts"/>
    <property type="match status" value="1"/>
</dbReference>
<dbReference type="InterPro" id="IPR036402">
    <property type="entry name" value="EF-Ts_dimer_sf"/>
</dbReference>
<dbReference type="InterPro" id="IPR001816">
    <property type="entry name" value="Transl_elong_EFTs/EF1B"/>
</dbReference>
<dbReference type="InterPro" id="IPR014039">
    <property type="entry name" value="Transl_elong_EFTs/EF1B_dimer"/>
</dbReference>
<dbReference type="InterPro" id="IPR018101">
    <property type="entry name" value="Transl_elong_Ts_CS"/>
</dbReference>
<dbReference type="InterPro" id="IPR009060">
    <property type="entry name" value="UBA-like_sf"/>
</dbReference>
<dbReference type="NCBIfam" id="TIGR00116">
    <property type="entry name" value="tsf"/>
    <property type="match status" value="1"/>
</dbReference>
<dbReference type="PANTHER" id="PTHR11741">
    <property type="entry name" value="ELONGATION FACTOR TS"/>
    <property type="match status" value="1"/>
</dbReference>
<dbReference type="PANTHER" id="PTHR11741:SF0">
    <property type="entry name" value="ELONGATION FACTOR TS, MITOCHONDRIAL"/>
    <property type="match status" value="1"/>
</dbReference>
<dbReference type="Pfam" id="PF00889">
    <property type="entry name" value="EF_TS"/>
    <property type="match status" value="1"/>
</dbReference>
<dbReference type="SUPFAM" id="SSF54713">
    <property type="entry name" value="Elongation factor Ts (EF-Ts), dimerisation domain"/>
    <property type="match status" value="2"/>
</dbReference>
<dbReference type="SUPFAM" id="SSF46934">
    <property type="entry name" value="UBA-like"/>
    <property type="match status" value="1"/>
</dbReference>
<dbReference type="PROSITE" id="PS01126">
    <property type="entry name" value="EF_TS_1"/>
    <property type="match status" value="1"/>
</dbReference>
<dbReference type="PROSITE" id="PS01127">
    <property type="entry name" value="EF_TS_2"/>
    <property type="match status" value="1"/>
</dbReference>
<reference key="1">
    <citation type="journal article" date="2008" name="PLoS ONE">
        <title>Genome biology of Actinobacillus pleuropneumoniae JL03, an isolate of serotype 3 prevalent in China.</title>
        <authorList>
            <person name="Xu Z."/>
            <person name="Zhou Y."/>
            <person name="Li L."/>
            <person name="Zhou R."/>
            <person name="Xiao S."/>
            <person name="Wan Y."/>
            <person name="Zhang S."/>
            <person name="Wang K."/>
            <person name="Li W."/>
            <person name="Li L."/>
            <person name="Jin H."/>
            <person name="Kang M."/>
            <person name="Dalai B."/>
            <person name="Li T."/>
            <person name="Liu L."/>
            <person name="Cheng Y."/>
            <person name="Zhang L."/>
            <person name="Xu T."/>
            <person name="Zheng H."/>
            <person name="Pu S."/>
            <person name="Wang B."/>
            <person name="Gu W."/>
            <person name="Zhang X.L."/>
            <person name="Zhu G.-F."/>
            <person name="Wang S."/>
            <person name="Zhao G.-P."/>
            <person name="Chen H."/>
        </authorList>
    </citation>
    <scope>NUCLEOTIDE SEQUENCE [LARGE SCALE GENOMIC DNA]</scope>
    <source>
        <strain>JL03</strain>
    </source>
</reference>